<proteinExistence type="inferred from homology"/>
<comment type="function">
    <text evidence="1">Plays an important role in the de novo pathway of purine nucleotide biosynthesis. Catalyzes the first committed step in the biosynthesis of AMP from IMP.</text>
</comment>
<comment type="catalytic activity">
    <reaction evidence="1">
        <text>IMP + L-aspartate + GTP = N(6)-(1,2-dicarboxyethyl)-AMP + GDP + phosphate + 2 H(+)</text>
        <dbReference type="Rhea" id="RHEA:15753"/>
        <dbReference type="ChEBI" id="CHEBI:15378"/>
        <dbReference type="ChEBI" id="CHEBI:29991"/>
        <dbReference type="ChEBI" id="CHEBI:37565"/>
        <dbReference type="ChEBI" id="CHEBI:43474"/>
        <dbReference type="ChEBI" id="CHEBI:57567"/>
        <dbReference type="ChEBI" id="CHEBI:58053"/>
        <dbReference type="ChEBI" id="CHEBI:58189"/>
        <dbReference type="EC" id="6.3.4.4"/>
    </reaction>
</comment>
<comment type="cofactor">
    <cofactor evidence="1">
        <name>Mg(2+)</name>
        <dbReference type="ChEBI" id="CHEBI:18420"/>
    </cofactor>
    <text evidence="1">Binds 1 Mg(2+) ion per subunit.</text>
</comment>
<comment type="pathway">
    <text evidence="1">Purine metabolism; AMP biosynthesis via de novo pathway; AMP from IMP: step 1/2.</text>
</comment>
<comment type="subunit">
    <text evidence="1">Homodimer.</text>
</comment>
<comment type="subcellular location">
    <subcellularLocation>
        <location evidence="1">Cytoplasm</location>
    </subcellularLocation>
</comment>
<comment type="similarity">
    <text evidence="1">Belongs to the adenylosuccinate synthetase family.</text>
</comment>
<organism>
    <name type="scientific">Cereibacter sphaeroides (strain KD131 / KCTC 12085)</name>
    <name type="common">Rhodobacter sphaeroides</name>
    <dbReference type="NCBI Taxonomy" id="557760"/>
    <lineage>
        <taxon>Bacteria</taxon>
        <taxon>Pseudomonadati</taxon>
        <taxon>Pseudomonadota</taxon>
        <taxon>Alphaproteobacteria</taxon>
        <taxon>Rhodobacterales</taxon>
        <taxon>Paracoccaceae</taxon>
        <taxon>Cereibacter</taxon>
    </lineage>
</organism>
<keyword id="KW-0963">Cytoplasm</keyword>
<keyword id="KW-0342">GTP-binding</keyword>
<keyword id="KW-0436">Ligase</keyword>
<keyword id="KW-0460">Magnesium</keyword>
<keyword id="KW-0479">Metal-binding</keyword>
<keyword id="KW-0547">Nucleotide-binding</keyword>
<keyword id="KW-0658">Purine biosynthesis</keyword>
<evidence type="ECO:0000255" key="1">
    <source>
        <dbReference type="HAMAP-Rule" id="MF_00011"/>
    </source>
</evidence>
<feature type="chain" id="PRO_1000194772" description="Adenylosuccinate synthetase">
    <location>
        <begin position="1"/>
        <end position="430"/>
    </location>
</feature>
<feature type="active site" description="Proton acceptor" evidence="1">
    <location>
        <position position="13"/>
    </location>
</feature>
<feature type="active site" description="Proton donor" evidence="1">
    <location>
        <position position="41"/>
    </location>
</feature>
<feature type="binding site" evidence="1">
    <location>
        <begin position="12"/>
        <end position="18"/>
    </location>
    <ligand>
        <name>GTP</name>
        <dbReference type="ChEBI" id="CHEBI:37565"/>
    </ligand>
</feature>
<feature type="binding site" description="in other chain" evidence="1">
    <location>
        <begin position="13"/>
        <end position="16"/>
    </location>
    <ligand>
        <name>IMP</name>
        <dbReference type="ChEBI" id="CHEBI:58053"/>
        <note>ligand shared between dimeric partners</note>
    </ligand>
</feature>
<feature type="binding site" evidence="1">
    <location>
        <position position="13"/>
    </location>
    <ligand>
        <name>Mg(2+)</name>
        <dbReference type="ChEBI" id="CHEBI:18420"/>
    </ligand>
</feature>
<feature type="binding site" description="in other chain" evidence="1">
    <location>
        <begin position="38"/>
        <end position="41"/>
    </location>
    <ligand>
        <name>IMP</name>
        <dbReference type="ChEBI" id="CHEBI:58053"/>
        <note>ligand shared between dimeric partners</note>
    </ligand>
</feature>
<feature type="binding site" evidence="1">
    <location>
        <begin position="40"/>
        <end position="42"/>
    </location>
    <ligand>
        <name>GTP</name>
        <dbReference type="ChEBI" id="CHEBI:37565"/>
    </ligand>
</feature>
<feature type="binding site" evidence="1">
    <location>
        <position position="40"/>
    </location>
    <ligand>
        <name>Mg(2+)</name>
        <dbReference type="ChEBI" id="CHEBI:18420"/>
    </ligand>
</feature>
<feature type="binding site" description="in other chain" evidence="1">
    <location>
        <position position="130"/>
    </location>
    <ligand>
        <name>IMP</name>
        <dbReference type="ChEBI" id="CHEBI:58053"/>
        <note>ligand shared between dimeric partners</note>
    </ligand>
</feature>
<feature type="binding site" evidence="1">
    <location>
        <position position="144"/>
    </location>
    <ligand>
        <name>IMP</name>
        <dbReference type="ChEBI" id="CHEBI:58053"/>
        <note>ligand shared between dimeric partners</note>
    </ligand>
</feature>
<feature type="binding site" description="in other chain" evidence="1">
    <location>
        <position position="224"/>
    </location>
    <ligand>
        <name>IMP</name>
        <dbReference type="ChEBI" id="CHEBI:58053"/>
        <note>ligand shared between dimeric partners</note>
    </ligand>
</feature>
<feature type="binding site" description="in other chain" evidence="1">
    <location>
        <position position="239"/>
    </location>
    <ligand>
        <name>IMP</name>
        <dbReference type="ChEBI" id="CHEBI:58053"/>
        <note>ligand shared between dimeric partners</note>
    </ligand>
</feature>
<feature type="binding site" evidence="1">
    <location>
        <begin position="299"/>
        <end position="305"/>
    </location>
    <ligand>
        <name>substrate</name>
    </ligand>
</feature>
<feature type="binding site" description="in other chain" evidence="1">
    <location>
        <position position="303"/>
    </location>
    <ligand>
        <name>IMP</name>
        <dbReference type="ChEBI" id="CHEBI:58053"/>
        <note>ligand shared between dimeric partners</note>
    </ligand>
</feature>
<feature type="binding site" evidence="1">
    <location>
        <position position="305"/>
    </location>
    <ligand>
        <name>GTP</name>
        <dbReference type="ChEBI" id="CHEBI:37565"/>
    </ligand>
</feature>
<feature type="binding site" evidence="1">
    <location>
        <begin position="331"/>
        <end position="333"/>
    </location>
    <ligand>
        <name>GTP</name>
        <dbReference type="ChEBI" id="CHEBI:37565"/>
    </ligand>
</feature>
<feature type="binding site" evidence="1">
    <location>
        <begin position="413"/>
        <end position="415"/>
    </location>
    <ligand>
        <name>GTP</name>
        <dbReference type="ChEBI" id="CHEBI:37565"/>
    </ligand>
</feature>
<protein>
    <recommendedName>
        <fullName evidence="1">Adenylosuccinate synthetase</fullName>
        <shortName evidence="1">AMPSase</shortName>
        <shortName evidence="1">AdSS</shortName>
        <ecNumber evidence="1">6.3.4.4</ecNumber>
    </recommendedName>
    <alternativeName>
        <fullName evidence="1">IMP--aspartate ligase</fullName>
    </alternativeName>
</protein>
<accession>B9KKA7</accession>
<dbReference type="EC" id="6.3.4.4" evidence="1"/>
<dbReference type="EMBL" id="CP001150">
    <property type="protein sequence ID" value="ACM01554.1"/>
    <property type="molecule type" value="Genomic_DNA"/>
</dbReference>
<dbReference type="RefSeq" id="WP_002720530.1">
    <property type="nucleotide sequence ID" value="NC_011963.1"/>
</dbReference>
<dbReference type="SMR" id="B9KKA7"/>
<dbReference type="GeneID" id="67447099"/>
<dbReference type="KEGG" id="rsk:RSKD131_1694"/>
<dbReference type="HOGENOM" id="CLU_029848_0_0_5"/>
<dbReference type="UniPathway" id="UPA00075">
    <property type="reaction ID" value="UER00335"/>
</dbReference>
<dbReference type="GO" id="GO:0005737">
    <property type="term" value="C:cytoplasm"/>
    <property type="evidence" value="ECO:0007669"/>
    <property type="project" value="UniProtKB-SubCell"/>
</dbReference>
<dbReference type="GO" id="GO:0004019">
    <property type="term" value="F:adenylosuccinate synthase activity"/>
    <property type="evidence" value="ECO:0007669"/>
    <property type="project" value="UniProtKB-UniRule"/>
</dbReference>
<dbReference type="GO" id="GO:0005525">
    <property type="term" value="F:GTP binding"/>
    <property type="evidence" value="ECO:0007669"/>
    <property type="project" value="UniProtKB-UniRule"/>
</dbReference>
<dbReference type="GO" id="GO:0000287">
    <property type="term" value="F:magnesium ion binding"/>
    <property type="evidence" value="ECO:0007669"/>
    <property type="project" value="UniProtKB-UniRule"/>
</dbReference>
<dbReference type="GO" id="GO:0044208">
    <property type="term" value="P:'de novo' AMP biosynthetic process"/>
    <property type="evidence" value="ECO:0007669"/>
    <property type="project" value="UniProtKB-UniRule"/>
</dbReference>
<dbReference type="GO" id="GO:0046040">
    <property type="term" value="P:IMP metabolic process"/>
    <property type="evidence" value="ECO:0007669"/>
    <property type="project" value="TreeGrafter"/>
</dbReference>
<dbReference type="CDD" id="cd03108">
    <property type="entry name" value="AdSS"/>
    <property type="match status" value="1"/>
</dbReference>
<dbReference type="FunFam" id="1.10.300.10:FF:000001">
    <property type="entry name" value="Adenylosuccinate synthetase"/>
    <property type="match status" value="1"/>
</dbReference>
<dbReference type="FunFam" id="3.90.170.10:FF:000001">
    <property type="entry name" value="Adenylosuccinate synthetase"/>
    <property type="match status" value="1"/>
</dbReference>
<dbReference type="Gene3D" id="3.40.440.10">
    <property type="entry name" value="Adenylosuccinate Synthetase, subunit A, domain 1"/>
    <property type="match status" value="1"/>
</dbReference>
<dbReference type="Gene3D" id="1.10.300.10">
    <property type="entry name" value="Adenylosuccinate Synthetase, subunit A, domain 2"/>
    <property type="match status" value="1"/>
</dbReference>
<dbReference type="Gene3D" id="3.90.170.10">
    <property type="entry name" value="Adenylosuccinate Synthetase, subunit A, domain 3"/>
    <property type="match status" value="1"/>
</dbReference>
<dbReference type="HAMAP" id="MF_00011">
    <property type="entry name" value="Adenylosucc_synth"/>
    <property type="match status" value="1"/>
</dbReference>
<dbReference type="InterPro" id="IPR018220">
    <property type="entry name" value="Adenylosuccin_syn_GTP-bd"/>
</dbReference>
<dbReference type="InterPro" id="IPR033128">
    <property type="entry name" value="Adenylosuccin_syn_Lys_AS"/>
</dbReference>
<dbReference type="InterPro" id="IPR042109">
    <property type="entry name" value="Adenylosuccinate_synth_dom1"/>
</dbReference>
<dbReference type="InterPro" id="IPR042110">
    <property type="entry name" value="Adenylosuccinate_synth_dom2"/>
</dbReference>
<dbReference type="InterPro" id="IPR042111">
    <property type="entry name" value="Adenylosuccinate_synth_dom3"/>
</dbReference>
<dbReference type="InterPro" id="IPR001114">
    <property type="entry name" value="Adenylosuccinate_synthetase"/>
</dbReference>
<dbReference type="InterPro" id="IPR027417">
    <property type="entry name" value="P-loop_NTPase"/>
</dbReference>
<dbReference type="NCBIfam" id="NF002223">
    <property type="entry name" value="PRK01117.1"/>
    <property type="match status" value="1"/>
</dbReference>
<dbReference type="NCBIfam" id="TIGR00184">
    <property type="entry name" value="purA"/>
    <property type="match status" value="1"/>
</dbReference>
<dbReference type="PANTHER" id="PTHR11846">
    <property type="entry name" value="ADENYLOSUCCINATE SYNTHETASE"/>
    <property type="match status" value="1"/>
</dbReference>
<dbReference type="PANTHER" id="PTHR11846:SF0">
    <property type="entry name" value="ADENYLOSUCCINATE SYNTHETASE"/>
    <property type="match status" value="1"/>
</dbReference>
<dbReference type="Pfam" id="PF00709">
    <property type="entry name" value="Adenylsucc_synt"/>
    <property type="match status" value="1"/>
</dbReference>
<dbReference type="SMART" id="SM00788">
    <property type="entry name" value="Adenylsucc_synt"/>
    <property type="match status" value="1"/>
</dbReference>
<dbReference type="SUPFAM" id="SSF52540">
    <property type="entry name" value="P-loop containing nucleoside triphosphate hydrolases"/>
    <property type="match status" value="1"/>
</dbReference>
<dbReference type="PROSITE" id="PS01266">
    <property type="entry name" value="ADENYLOSUCCIN_SYN_1"/>
    <property type="match status" value="1"/>
</dbReference>
<dbReference type="PROSITE" id="PS00513">
    <property type="entry name" value="ADENYLOSUCCIN_SYN_2"/>
    <property type="match status" value="1"/>
</dbReference>
<reference key="1">
    <citation type="journal article" date="2009" name="J. Bacteriol.">
        <title>Complete genome sequence of Rhodobacter sphaeroides KD131.</title>
        <authorList>
            <person name="Lim S.-K."/>
            <person name="Kim S.J."/>
            <person name="Cha S.H."/>
            <person name="Oh Y.-K."/>
            <person name="Rhee H.-J."/>
            <person name="Kim M.-S."/>
            <person name="Lee J.K."/>
        </authorList>
    </citation>
    <scope>NUCLEOTIDE SEQUENCE [LARGE SCALE GENOMIC DNA]</scope>
    <source>
        <strain>KD131 / KCTC 12085</strain>
    </source>
</reference>
<sequence length="430" mass="46409">MANVVVVGAQWGDEGKGKIVDWLSERADVIARFQGGHNAGHTLVIDGKVYKLSLLPSGIVRPGKLSVIGNGVVLDPWHLVQEIAKLRADGVEISPESLMIAENAVLILPLHGELDRARESQNSVAKIGTTGRGIGPAYEDKVGRRAIRVADLADEATLALRVDRLMVHHDALRRGLGIEPVDREALLAQLREIAPQVLPYAKPVWKVMNEMRKAGKRILFEGAQGALLDIDFGTYPYVTSSNVIAGQAATGTGIGPGAIGFVLGIVKAYTTRVGEGPFPAELQDADGERLGERGREFGTVTGRKRRCGWFDAVLVRQTCATSGVSGIALTKLDVLDGFETLKICVGYELDGERLDHLPIAADQQARCTPIFEELEGWSESTAGARSWADLPGAAVKYVRRIEELIQCPVALLSTSPERDDTILVTDPFED</sequence>
<gene>
    <name evidence="1" type="primary">purA</name>
    <name type="ordered locus">RSKD131_1694</name>
</gene>
<name>PURA_CERSK</name>